<proteinExistence type="evidence at transcript level"/>
<dbReference type="EMBL" id="AF020792">
    <property type="protein sequence ID" value="AAB71888.1"/>
    <property type="molecule type" value="mRNA"/>
</dbReference>
<dbReference type="EMBL" id="U95369">
    <property type="protein sequence ID" value="AAC48735.1"/>
    <property type="molecule type" value="mRNA"/>
</dbReference>
<dbReference type="EMBL" id="AY052548">
    <property type="protein sequence ID" value="AAL05937.1"/>
    <property type="molecule type" value="mRNA"/>
</dbReference>
<dbReference type="RefSeq" id="NP_776798.1">
    <property type="nucleotide sequence ID" value="NM_174373.2"/>
</dbReference>
<dbReference type="SMR" id="O19182"/>
<dbReference type="FunCoup" id="O19182">
    <property type="interactions" value="284"/>
</dbReference>
<dbReference type="STRING" id="9913.ENSBTAP00000010914"/>
<dbReference type="PaxDb" id="9913-ENSBTAP00000010914"/>
<dbReference type="Ensembl" id="ENSBTAT00000010914.6">
    <property type="protein sequence ID" value="ENSBTAP00000010914.4"/>
    <property type="gene ID" value="ENSBTAG00000008294.6"/>
</dbReference>
<dbReference type="Ensembl" id="ENSBTAT00000088193.1">
    <property type="protein sequence ID" value="ENSBTAP00000089690.1"/>
    <property type="gene ID" value="ENSBTAG00000008294.6"/>
</dbReference>
<dbReference type="Ensembl" id="ENSBTAT00000099488.1">
    <property type="protein sequence ID" value="ENSBTAP00000090812.1"/>
    <property type="gene ID" value="ENSBTAG00000008294.6"/>
</dbReference>
<dbReference type="Ensembl" id="ENSBTAT00000114611.1">
    <property type="protein sequence ID" value="ENSBTAP00000087486.1"/>
    <property type="gene ID" value="ENSBTAG00000008294.6"/>
</dbReference>
<dbReference type="Ensembl" id="ENSBTAT00000135291.1">
    <property type="protein sequence ID" value="ENSBTAP00000103215.1"/>
    <property type="gene ID" value="ENSBTAG00000008294.6"/>
</dbReference>
<dbReference type="GeneID" id="281883"/>
<dbReference type="KEGG" id="bta:281883"/>
<dbReference type="CTD" id="3759"/>
<dbReference type="VEuPathDB" id="HostDB:ENSBTAG00000008294"/>
<dbReference type="VGNC" id="VGNC:30460">
    <property type="gene designation" value="KCNJ2"/>
</dbReference>
<dbReference type="eggNOG" id="KOG3827">
    <property type="taxonomic scope" value="Eukaryota"/>
</dbReference>
<dbReference type="GeneTree" id="ENSGT01030000234586"/>
<dbReference type="HOGENOM" id="CLU_022738_3_0_1"/>
<dbReference type="InParanoid" id="O19182"/>
<dbReference type="OMA" id="THPEMDH"/>
<dbReference type="OrthoDB" id="273257at2759"/>
<dbReference type="TreeFam" id="TF313676"/>
<dbReference type="Reactome" id="R-BTA-1296041">
    <property type="pathway name" value="Activation of G protein gated Potassium channels"/>
</dbReference>
<dbReference type="Reactome" id="R-BTA-1296053">
    <property type="pathway name" value="Classical Kir channels"/>
</dbReference>
<dbReference type="Reactome" id="R-BTA-5576886">
    <property type="pathway name" value="Phase 4 - resting membrane potential"/>
</dbReference>
<dbReference type="Reactome" id="R-BTA-997272">
    <property type="pathway name" value="Inhibition of voltage gated Ca2+ channels via Gbeta/gamma subunits"/>
</dbReference>
<dbReference type="Proteomes" id="UP000009136">
    <property type="component" value="Chromosome 19"/>
</dbReference>
<dbReference type="Bgee" id="ENSBTAG00000008294">
    <property type="expression patterns" value="Expressed in neutrophil and 96 other cell types or tissues"/>
</dbReference>
<dbReference type="GO" id="GO:0016020">
    <property type="term" value="C:membrane"/>
    <property type="evidence" value="ECO:0000250"/>
    <property type="project" value="UniProtKB"/>
</dbReference>
<dbReference type="GO" id="GO:0005886">
    <property type="term" value="C:plasma membrane"/>
    <property type="evidence" value="ECO:0000318"/>
    <property type="project" value="GO_Central"/>
</dbReference>
<dbReference type="GO" id="GO:0030315">
    <property type="term" value="C:T-tubule"/>
    <property type="evidence" value="ECO:0000250"/>
    <property type="project" value="UniProtKB"/>
</dbReference>
<dbReference type="GO" id="GO:0008076">
    <property type="term" value="C:voltage-gated potassium channel complex"/>
    <property type="evidence" value="ECO:0007669"/>
    <property type="project" value="Ensembl"/>
</dbReference>
<dbReference type="GO" id="GO:0042802">
    <property type="term" value="F:identical protein binding"/>
    <property type="evidence" value="ECO:0007669"/>
    <property type="project" value="Ensembl"/>
</dbReference>
<dbReference type="GO" id="GO:0005242">
    <property type="term" value="F:inward rectifier potassium channel activity"/>
    <property type="evidence" value="ECO:0000314"/>
    <property type="project" value="UniProtKB"/>
</dbReference>
<dbReference type="GO" id="GO:0005546">
    <property type="term" value="F:phosphatidylinositol-4,5-bisphosphate binding"/>
    <property type="evidence" value="ECO:0000250"/>
    <property type="project" value="UniProtKB"/>
</dbReference>
<dbReference type="GO" id="GO:0086008">
    <property type="term" value="F:voltage-gated potassium channel activity involved in cardiac muscle cell action potential repolarization"/>
    <property type="evidence" value="ECO:0007669"/>
    <property type="project" value="Ensembl"/>
</dbReference>
<dbReference type="GO" id="GO:0086002">
    <property type="term" value="P:cardiac muscle cell action potential involved in contraction"/>
    <property type="evidence" value="ECO:0007669"/>
    <property type="project" value="Ensembl"/>
</dbReference>
<dbReference type="GO" id="GO:0015693">
    <property type="term" value="P:magnesium ion transport"/>
    <property type="evidence" value="ECO:0007669"/>
    <property type="project" value="Ensembl"/>
</dbReference>
<dbReference type="GO" id="GO:1990573">
    <property type="term" value="P:potassium ion import across plasma membrane"/>
    <property type="evidence" value="ECO:0000318"/>
    <property type="project" value="GO_Central"/>
</dbReference>
<dbReference type="GO" id="GO:0006813">
    <property type="term" value="P:potassium ion transport"/>
    <property type="evidence" value="ECO:0000250"/>
    <property type="project" value="UniProtKB"/>
</dbReference>
<dbReference type="GO" id="GO:0051289">
    <property type="term" value="P:protein homotetramerization"/>
    <property type="evidence" value="ECO:0000250"/>
    <property type="project" value="UniProtKB"/>
</dbReference>
<dbReference type="GO" id="GO:0086091">
    <property type="term" value="P:regulation of heart rate by cardiac conduction"/>
    <property type="evidence" value="ECO:0007669"/>
    <property type="project" value="Ensembl"/>
</dbReference>
<dbReference type="GO" id="GO:0060306">
    <property type="term" value="P:regulation of membrane repolarization"/>
    <property type="evidence" value="ECO:0007669"/>
    <property type="project" value="Ensembl"/>
</dbReference>
<dbReference type="GO" id="GO:0034765">
    <property type="term" value="P:regulation of monoatomic ion transmembrane transport"/>
    <property type="evidence" value="ECO:0000318"/>
    <property type="project" value="GO_Central"/>
</dbReference>
<dbReference type="GO" id="GO:0014861">
    <property type="term" value="P:regulation of skeletal muscle contraction via regulation of action potential"/>
    <property type="evidence" value="ECO:0007669"/>
    <property type="project" value="Ensembl"/>
</dbReference>
<dbReference type="GO" id="GO:0055119">
    <property type="term" value="P:relaxation of cardiac muscle"/>
    <property type="evidence" value="ECO:0007669"/>
    <property type="project" value="Ensembl"/>
</dbReference>
<dbReference type="GO" id="GO:0090076">
    <property type="term" value="P:relaxation of skeletal muscle"/>
    <property type="evidence" value="ECO:0007669"/>
    <property type="project" value="Ensembl"/>
</dbReference>
<dbReference type="FunFam" id="1.10.287.70:FF:000039">
    <property type="entry name" value="ATP-sensitive inward rectifier potassium channel 12"/>
    <property type="match status" value="1"/>
</dbReference>
<dbReference type="FunFam" id="2.60.40.1400:FF:000001">
    <property type="entry name" value="G protein-activated inward rectifier potassium channel 2"/>
    <property type="match status" value="1"/>
</dbReference>
<dbReference type="Gene3D" id="1.10.287.70">
    <property type="match status" value="1"/>
</dbReference>
<dbReference type="Gene3D" id="2.60.40.1400">
    <property type="entry name" value="G protein-activated inward rectifier potassium channel 1"/>
    <property type="match status" value="1"/>
</dbReference>
<dbReference type="InterPro" id="IPR014756">
    <property type="entry name" value="Ig_E-set"/>
</dbReference>
<dbReference type="InterPro" id="IPR041647">
    <property type="entry name" value="IRK_C"/>
</dbReference>
<dbReference type="InterPro" id="IPR016449">
    <property type="entry name" value="K_chnl_inward-rec_Kir"/>
</dbReference>
<dbReference type="InterPro" id="IPR003271">
    <property type="entry name" value="K_chnl_inward-rec_Kir2.1"/>
</dbReference>
<dbReference type="InterPro" id="IPR013518">
    <property type="entry name" value="K_chnl_inward-rec_Kir_cyto"/>
</dbReference>
<dbReference type="InterPro" id="IPR013673">
    <property type="entry name" value="K_chnl_inward-rec_Kir_N"/>
</dbReference>
<dbReference type="InterPro" id="IPR040445">
    <property type="entry name" value="Kir_TM"/>
</dbReference>
<dbReference type="PANTHER" id="PTHR11767">
    <property type="entry name" value="INWARD RECTIFIER POTASSIUM CHANNEL"/>
    <property type="match status" value="1"/>
</dbReference>
<dbReference type="PANTHER" id="PTHR11767:SF43">
    <property type="entry name" value="INWARD RECTIFIER POTASSIUM CHANNEL 2"/>
    <property type="match status" value="1"/>
</dbReference>
<dbReference type="Pfam" id="PF01007">
    <property type="entry name" value="IRK"/>
    <property type="match status" value="1"/>
</dbReference>
<dbReference type="Pfam" id="PF17655">
    <property type="entry name" value="IRK_C"/>
    <property type="match status" value="1"/>
</dbReference>
<dbReference type="Pfam" id="PF08466">
    <property type="entry name" value="IRK_N"/>
    <property type="match status" value="1"/>
</dbReference>
<dbReference type="PIRSF" id="PIRSF005465">
    <property type="entry name" value="GIRK_kir"/>
    <property type="match status" value="1"/>
</dbReference>
<dbReference type="PRINTS" id="PR01324">
    <property type="entry name" value="KIR21CHANNEL"/>
</dbReference>
<dbReference type="PRINTS" id="PR01320">
    <property type="entry name" value="KIRCHANNEL"/>
</dbReference>
<dbReference type="SUPFAM" id="SSF81296">
    <property type="entry name" value="E set domains"/>
    <property type="match status" value="1"/>
</dbReference>
<dbReference type="SUPFAM" id="SSF81324">
    <property type="entry name" value="Voltage-gated potassium channels"/>
    <property type="match status" value="1"/>
</dbReference>
<sequence>MGSVRTNRYSIVSSEEDGMKLATLAVANGFGNGKSKVHTRQQCRSRFVKKDGHCNVQFINVGEKGQRYLADIFTTCVDIRWRWMLVIFCLAFVLSWLFFGCVFWLIALLHGDLDASKESKACVSEVNSFTAAFLFSIETQTTIGYGFRCVTDECPVAVFMVVFQSIVGCIIDAFIIGAVMAKMAKPKKRNETLVFSHNAVIAMRDGKLCLMWRVGNLRKSHLVEAHVRAQLLKSRITSEGEYIPLDQIDINVGFDSGIDRIFLVSPITIVHEIDEDSPLYDLSKQDIDNADFEIVVILEGMVEATAMTTQCRSSYLANEILWGHRYEPVLFEEKHYYKVDYSRFHKTYEVPNTPLCSARDLAEKKYILSNANSFCYENEVALTSKEEDDSENGVPESTSTDTPPDIDLHNQASVPLEPRPLRRESEI</sequence>
<reference key="1">
    <citation type="journal article" date="1998" name="Exp. Eye Res.">
        <title>Inwardly rectifying potassium channels in lens epithelium are from the IRK1 (Kir 2.1) family.</title>
        <authorList>
            <person name="Rae J.L."/>
            <person name="Shepard A.R."/>
        </authorList>
    </citation>
    <scope>NUCLEOTIDE SEQUENCE [MRNA]</scope>
    <source>
        <tissue>Lens epithelium</tissue>
    </source>
</reference>
<reference key="2">
    <citation type="journal article" date="1997" name="FEBS Lett.">
        <title>Molecular cloning and expression of a bovine endothelial inward rectifier potassium channel.</title>
        <authorList>
            <person name="Forsyth S.E."/>
            <person name="Hoger A."/>
            <person name="Hoger J.H."/>
        </authorList>
    </citation>
    <scope>NUCLEOTIDE SEQUENCE [MRNA]</scope>
    <scope>FUNCTION</scope>
    <scope>TRANSPORTER ACTIVITY</scope>
    <source>
        <tissue>Aorta</tissue>
    </source>
</reference>
<reference key="3">
    <citation type="journal article" date="2000" name="Invest. Ophthalmol. Vis. Sci.">
        <title>Molecular cloning and expression of an inwardly rectifying K(+) channel from bovine corneal endothelial cells.</title>
        <authorList>
            <person name="Yang D."/>
            <person name="Sun F."/>
            <person name="Thomas L.L."/>
            <person name="Offord J."/>
            <person name="MacCallum D.K."/>
            <person name="Dawson D.C."/>
            <person name="Hughes B.A."/>
            <person name="Ernst S.A."/>
        </authorList>
    </citation>
    <scope>NUCLEOTIDE SEQUENCE [MRNA]</scope>
    <scope>FUNCTION</scope>
    <scope>TRANSPORTER ACTIVITY</scope>
    <source>
        <tissue>Corneal endothelium</tissue>
    </source>
</reference>
<name>KCNJ2_BOVIN</name>
<comment type="function">
    <text evidence="2 6 7">Inward rectifier potassium channels are characterized by a greater tendency to allow potassium to flow into the cell rather than out of it. Their voltage dependence is regulated by the concentration of extracellular potassium; as external potassium is raised, the voltage range of the channel opening shifts to more positive voltages. The inward rectification is mainly due to the blockage of outward current by internal magnesium. Can be blocked by extracellular barium and cesium (PubMed:9202161, PubMed:10967048). Probably participates in establishing action potential waveform and excitability of neuronal and muscle tissues (By similarity).</text>
</comment>
<comment type="catalytic activity">
    <reaction evidence="6 7">
        <text>K(+)(in) = K(+)(out)</text>
        <dbReference type="Rhea" id="RHEA:29463"/>
        <dbReference type="ChEBI" id="CHEBI:29103"/>
    </reaction>
</comment>
<comment type="activity regulation">
    <text evidence="3">Activated by phosphatidylinositol 4,5 biphosphate (PtdIns(4,5)P2).</text>
</comment>
<comment type="subunit">
    <text evidence="2 3">Homotetramer. Homomultimeric and heteromultimeric association with KCNJ4/Kir2.3. Can form heteromeric channels with Kir2.6/KCNJ18 (By similarity). Associates, via its PDZ-recognition domain, with a complex containing LIN7A, LIN7B, LIN7C, DLG1, CASK and APBA1.</text>
</comment>
<comment type="subcellular location">
    <subcellularLocation>
        <location evidence="2">Cell membrane</location>
        <topology evidence="4">Multi-pass membrane protein</topology>
    </subcellularLocation>
    <subcellularLocation>
        <location evidence="3">Cell membrane</location>
        <location evidence="3">Sarcolemma</location>
        <location evidence="3">T-tubule</location>
    </subcellularLocation>
</comment>
<comment type="PTM">
    <text evidence="2">S-nitrosylation increases the open probability and inward rectifying currents.</text>
</comment>
<comment type="similarity">
    <text evidence="8">Belongs to the inward rectifier-type potassium channel (TC 1.A.2.1) family. KCNJ2 subfamily.</text>
</comment>
<evidence type="ECO:0000250" key="1"/>
<evidence type="ECO:0000250" key="2">
    <source>
        <dbReference type="UniProtKB" id="P63252"/>
    </source>
</evidence>
<evidence type="ECO:0000250" key="3">
    <source>
        <dbReference type="UniProtKB" id="Q64273"/>
    </source>
</evidence>
<evidence type="ECO:0000255" key="4"/>
<evidence type="ECO:0000256" key="5">
    <source>
        <dbReference type="SAM" id="MobiDB-lite"/>
    </source>
</evidence>
<evidence type="ECO:0000269" key="6">
    <source>
    </source>
</evidence>
<evidence type="ECO:0000269" key="7">
    <source>
    </source>
</evidence>
<evidence type="ECO:0000305" key="8"/>
<organism>
    <name type="scientific">Bos taurus</name>
    <name type="common">Bovine</name>
    <dbReference type="NCBI Taxonomy" id="9913"/>
    <lineage>
        <taxon>Eukaryota</taxon>
        <taxon>Metazoa</taxon>
        <taxon>Chordata</taxon>
        <taxon>Craniata</taxon>
        <taxon>Vertebrata</taxon>
        <taxon>Euteleostomi</taxon>
        <taxon>Mammalia</taxon>
        <taxon>Eutheria</taxon>
        <taxon>Laurasiatheria</taxon>
        <taxon>Artiodactyla</taxon>
        <taxon>Ruminantia</taxon>
        <taxon>Pecora</taxon>
        <taxon>Bovidae</taxon>
        <taxon>Bovinae</taxon>
        <taxon>Bos</taxon>
    </lineage>
</organism>
<keyword id="KW-1003">Cell membrane</keyword>
<keyword id="KW-0407">Ion channel</keyword>
<keyword id="KW-0406">Ion transport</keyword>
<keyword id="KW-0472">Membrane</keyword>
<keyword id="KW-0630">Potassium</keyword>
<keyword id="KW-0633">Potassium transport</keyword>
<keyword id="KW-1185">Reference proteome</keyword>
<keyword id="KW-0702">S-nitrosylation</keyword>
<keyword id="KW-0812">Transmembrane</keyword>
<keyword id="KW-1133">Transmembrane helix</keyword>
<keyword id="KW-0813">Transport</keyword>
<keyword id="KW-0851">Voltage-gated channel</keyword>
<protein>
    <recommendedName>
        <fullName>Inward rectifier potassium channel 2</fullName>
    </recommendedName>
    <alternativeName>
        <fullName>BIK</fullName>
    </alternativeName>
    <alternativeName>
        <fullName>Inward rectifier K(+) channel Kir2.1</fullName>
        <shortName>IRK-1</shortName>
    </alternativeName>
    <alternativeName>
        <fullName>Potassium channel, inwardly rectifying subfamily J member 2</fullName>
    </alternativeName>
</protein>
<feature type="chain" id="PRO_0000154920" description="Inward rectifier potassium channel 2">
    <location>
        <begin position="1"/>
        <end position="427"/>
    </location>
</feature>
<feature type="topological domain" description="Cytoplasmic" evidence="1">
    <location>
        <begin position="1"/>
        <end position="81"/>
    </location>
</feature>
<feature type="transmembrane region" description="Helical; Name=M1" evidence="1">
    <location>
        <begin position="82"/>
        <end position="106"/>
    </location>
</feature>
<feature type="topological domain" description="Extracellular" evidence="1">
    <location>
        <begin position="107"/>
        <end position="128"/>
    </location>
</feature>
<feature type="intramembrane region" description="Helical; Pore-forming; Name=H5" evidence="1">
    <location>
        <begin position="129"/>
        <end position="140"/>
    </location>
</feature>
<feature type="intramembrane region" description="Pore-forming" evidence="1">
    <location>
        <begin position="141"/>
        <end position="147"/>
    </location>
</feature>
<feature type="topological domain" description="Extracellular" evidence="1">
    <location>
        <begin position="148"/>
        <end position="156"/>
    </location>
</feature>
<feature type="transmembrane region" description="Helical; Name=M2" evidence="1">
    <location>
        <begin position="157"/>
        <end position="178"/>
    </location>
</feature>
<feature type="topological domain" description="Cytoplasmic" evidence="1">
    <location>
        <begin position="179"/>
        <end position="427"/>
    </location>
</feature>
<feature type="region of interest" description="Polyphosphoinositide (PIP2)-binding" evidence="3">
    <location>
        <begin position="181"/>
        <end position="208"/>
    </location>
</feature>
<feature type="region of interest" description="Disordered" evidence="5">
    <location>
        <begin position="384"/>
        <end position="427"/>
    </location>
</feature>
<feature type="short sequence motif" description="Selectivity filter" evidence="1">
    <location>
        <begin position="142"/>
        <end position="147"/>
    </location>
</feature>
<feature type="short sequence motif" description="PDZ-binding" evidence="4">
    <location>
        <begin position="425"/>
        <end position="427"/>
    </location>
</feature>
<feature type="site" description="Role in the control of polyamine-mediated channel gating and in the blocking by intracellular magnesium" evidence="1">
    <location>
        <position position="172"/>
    </location>
</feature>
<feature type="modified residue" description="S-nitrosocysteine" evidence="2">
    <location>
        <position position="76"/>
    </location>
</feature>
<accession>O19182</accession>
<gene>
    <name type="primary">KCNJ2</name>
    <name type="synonym">IRK1</name>
</gene>